<sequence length="1116" mass="125133">MAADIGSQSSGSLEERFEQSLHLQNVDKQDWSLNSVLQFLKLYKFNKEWEDVFIKSRIEMDLFINLADQSKAEEFAFKNKLSKESAIQLSSCIRKTLLAPSSTRVPSKNSSYETLTYSAKDSSDDVFTETNSGFRSSNQNSSLKSFQSVPDSNVNVFGGFGGSVVDNNELLSTGKNSHQTTSLNLEGSPINLHAYKGTVTSIINDDSRNINKKTLSKQPVSEHKEKQTSFLRRFRVPGFSRDKDKTKDCPSSNSNPFHLASSNVKTLDASLDQGEWVPRIHRLESQIGLISKKKSFVLATMDDMKFTVVDITNVQNATQLRKLIAKSMYLDISIDQFDLFLTEVGGAQYIEILDDRKLDIARLYSDEFGTIKFFVKPSQNEESGMDSDTYLSFGTKSSSTYKADDDSIYHRKEDFKKQPSYPVLTSDFEITDAGPNLSLSGHQPDNKYYKGFSSAPNLAVVPELPSRRFRGFEKIRGAKGEMATKILDATEAQSEKNKFTVCRPHKKVTLKMPLNSGSSAPQSPSSNTSASVLTRNFVAHRDPPPPPTETSSLRRKNTLTRRPSIRHARSSPYIDTGHNEASKFSHTSFDPKASSKSSNSLKESVEALSEIPFEDAPALDESDLSGDPFWAIQPKQSSSQVPKENHHNIQSKLSINTEAATDLKANELSSPKTPEYCRGDDRSISLSPLSYRLRKSKHIRESPPSSKVINSGNWEVRPSADDLYEDVDRFFPRYDLDKVLVVDQSRMVSSPSKVSIRPKMKSVRLLAREASEARKEIRHNARRNKSGNLLRRSSTKLWGSRIVELKPDTTITSGSVVSQNATFKWMKGELIGNGTYGKVFLAMNINTGELIAVKQVEIPQTINGRHDQLRKDIVDSINAEISMIADLDHLNIVQYLGFEKTETDISIFLEYVSGGSIGRCLRNYGPFEEQLVRFVSRQVLYGLSYLHSKGIIHRDLKADNLLIDFDGVCKISDFGISKHSDNVYDNDANLSMQGSIFWMAPEVIHNDHQGYSAKVDVWSLGCVVLEMLAGRRPWSTDEAIQAMFKLGTEKKAPPIPSELVSQVSPEAIQFLNACFTVNADVRPTAEELLNHPFMKCDEEFNFKDTNLYDMLCKRKS</sequence>
<accession>Q10407</accession>
<keyword id="KW-0067">ATP-binding</keyword>
<keyword id="KW-0418">Kinase</keyword>
<keyword id="KW-0547">Nucleotide-binding</keyword>
<keyword id="KW-1185">Reference proteome</keyword>
<keyword id="KW-0723">Serine/threonine-protein kinase</keyword>
<keyword id="KW-0808">Transferase</keyword>
<feature type="chain" id="PRO_0000086331" description="MAP kinase kinase kinase mkh1">
    <location>
        <begin position="1"/>
        <end position="1116"/>
    </location>
</feature>
<feature type="domain" description="Protein kinase" evidence="1">
    <location>
        <begin position="825"/>
        <end position="1094"/>
    </location>
</feature>
<feature type="region of interest" description="Disordered" evidence="3">
    <location>
        <begin position="510"/>
        <end position="601"/>
    </location>
</feature>
<feature type="region of interest" description="Disordered" evidence="3">
    <location>
        <begin position="618"/>
        <end position="647"/>
    </location>
</feature>
<feature type="compositionally biased region" description="Low complexity" evidence="3">
    <location>
        <begin position="515"/>
        <end position="531"/>
    </location>
</feature>
<feature type="compositionally biased region" description="Basic residues" evidence="3">
    <location>
        <begin position="553"/>
        <end position="569"/>
    </location>
</feature>
<feature type="compositionally biased region" description="Low complexity" evidence="3">
    <location>
        <begin position="588"/>
        <end position="601"/>
    </location>
</feature>
<feature type="compositionally biased region" description="Polar residues" evidence="3">
    <location>
        <begin position="634"/>
        <end position="647"/>
    </location>
</feature>
<feature type="active site" description="Proton acceptor" evidence="1 2">
    <location>
        <position position="955"/>
    </location>
</feature>
<feature type="binding site" evidence="1">
    <location>
        <begin position="831"/>
        <end position="839"/>
    </location>
    <ligand>
        <name>ATP</name>
        <dbReference type="ChEBI" id="CHEBI:30616"/>
    </ligand>
</feature>
<feature type="binding site" evidence="1">
    <location>
        <position position="854"/>
    </location>
    <ligand>
        <name>ATP</name>
        <dbReference type="ChEBI" id="CHEBI:30616"/>
    </ligand>
</feature>
<reference key="1">
    <citation type="journal article" date="1997" name="Mol. Cell. Biol.">
        <title>Mkh1, a MEK kinase required for cell wall integrity and proper response to osmotic and temperature stress in Schizosaccharomyces pombe.</title>
        <authorList>
            <person name="Sengar A.S."/>
            <person name="Markley N.A."/>
            <person name="Marini N.J."/>
            <person name="Young D."/>
        </authorList>
    </citation>
    <scope>NUCLEOTIDE SEQUENCE [GENOMIC DNA]</scope>
    <source>
        <strain>SP66</strain>
    </source>
</reference>
<reference key="2">
    <citation type="journal article" date="2002" name="Nature">
        <title>The genome sequence of Schizosaccharomyces pombe.</title>
        <authorList>
            <person name="Wood V."/>
            <person name="Gwilliam R."/>
            <person name="Rajandream M.A."/>
            <person name="Lyne M.H."/>
            <person name="Lyne R."/>
            <person name="Stewart A."/>
            <person name="Sgouros J.G."/>
            <person name="Peat N."/>
            <person name="Hayles J."/>
            <person name="Baker S.G."/>
            <person name="Basham D."/>
            <person name="Bowman S."/>
            <person name="Brooks K."/>
            <person name="Brown D."/>
            <person name="Brown S."/>
            <person name="Chillingworth T."/>
            <person name="Churcher C.M."/>
            <person name="Collins M."/>
            <person name="Connor R."/>
            <person name="Cronin A."/>
            <person name="Davis P."/>
            <person name="Feltwell T."/>
            <person name="Fraser A."/>
            <person name="Gentles S."/>
            <person name="Goble A."/>
            <person name="Hamlin N."/>
            <person name="Harris D.E."/>
            <person name="Hidalgo J."/>
            <person name="Hodgson G."/>
            <person name="Holroyd S."/>
            <person name="Hornsby T."/>
            <person name="Howarth S."/>
            <person name="Huckle E.J."/>
            <person name="Hunt S."/>
            <person name="Jagels K."/>
            <person name="James K.D."/>
            <person name="Jones L."/>
            <person name="Jones M."/>
            <person name="Leather S."/>
            <person name="McDonald S."/>
            <person name="McLean J."/>
            <person name="Mooney P."/>
            <person name="Moule S."/>
            <person name="Mungall K.L."/>
            <person name="Murphy L.D."/>
            <person name="Niblett D."/>
            <person name="Odell C."/>
            <person name="Oliver K."/>
            <person name="O'Neil S."/>
            <person name="Pearson D."/>
            <person name="Quail M.A."/>
            <person name="Rabbinowitsch E."/>
            <person name="Rutherford K.M."/>
            <person name="Rutter S."/>
            <person name="Saunders D."/>
            <person name="Seeger K."/>
            <person name="Sharp S."/>
            <person name="Skelton J."/>
            <person name="Simmonds M.N."/>
            <person name="Squares R."/>
            <person name="Squares S."/>
            <person name="Stevens K."/>
            <person name="Taylor K."/>
            <person name="Taylor R.G."/>
            <person name="Tivey A."/>
            <person name="Walsh S.V."/>
            <person name="Warren T."/>
            <person name="Whitehead S."/>
            <person name="Woodward J.R."/>
            <person name="Volckaert G."/>
            <person name="Aert R."/>
            <person name="Robben J."/>
            <person name="Grymonprez B."/>
            <person name="Weltjens I."/>
            <person name="Vanstreels E."/>
            <person name="Rieger M."/>
            <person name="Schaefer M."/>
            <person name="Mueller-Auer S."/>
            <person name="Gabel C."/>
            <person name="Fuchs M."/>
            <person name="Duesterhoeft A."/>
            <person name="Fritzc C."/>
            <person name="Holzer E."/>
            <person name="Moestl D."/>
            <person name="Hilbert H."/>
            <person name="Borzym K."/>
            <person name="Langer I."/>
            <person name="Beck A."/>
            <person name="Lehrach H."/>
            <person name="Reinhardt R."/>
            <person name="Pohl T.M."/>
            <person name="Eger P."/>
            <person name="Zimmermann W."/>
            <person name="Wedler H."/>
            <person name="Wambutt R."/>
            <person name="Purnelle B."/>
            <person name="Goffeau A."/>
            <person name="Cadieu E."/>
            <person name="Dreano S."/>
            <person name="Gloux S."/>
            <person name="Lelaure V."/>
            <person name="Mottier S."/>
            <person name="Galibert F."/>
            <person name="Aves S.J."/>
            <person name="Xiang Z."/>
            <person name="Hunt C."/>
            <person name="Moore K."/>
            <person name="Hurst S.M."/>
            <person name="Lucas M."/>
            <person name="Rochet M."/>
            <person name="Gaillardin C."/>
            <person name="Tallada V.A."/>
            <person name="Garzon A."/>
            <person name="Thode G."/>
            <person name="Daga R.R."/>
            <person name="Cruzado L."/>
            <person name="Jimenez J."/>
            <person name="Sanchez M."/>
            <person name="del Rey F."/>
            <person name="Benito J."/>
            <person name="Dominguez A."/>
            <person name="Revuelta J.L."/>
            <person name="Moreno S."/>
            <person name="Armstrong J."/>
            <person name="Forsburg S.L."/>
            <person name="Cerutti L."/>
            <person name="Lowe T."/>
            <person name="McCombie W.R."/>
            <person name="Paulsen I."/>
            <person name="Potashkin J."/>
            <person name="Shpakovski G.V."/>
            <person name="Ussery D."/>
            <person name="Barrell B.G."/>
            <person name="Nurse P."/>
        </authorList>
    </citation>
    <scope>NUCLEOTIDE SEQUENCE [LARGE SCALE GENOMIC DNA]</scope>
    <source>
        <strain>972 / ATCC 24843</strain>
    </source>
</reference>
<name>MKH1_SCHPO</name>
<evidence type="ECO:0000255" key="1">
    <source>
        <dbReference type="PROSITE-ProRule" id="PRU00159"/>
    </source>
</evidence>
<evidence type="ECO:0000255" key="2">
    <source>
        <dbReference type="PROSITE-ProRule" id="PRU10027"/>
    </source>
</evidence>
<evidence type="ECO:0000256" key="3">
    <source>
        <dbReference type="SAM" id="MobiDB-lite"/>
    </source>
</evidence>
<evidence type="ECO:0000305" key="4"/>
<comment type="function">
    <text>May regulate cell morphology, cell wall integrity, salt resistance, cell cycle reentry from stationary-phase arrest, and filamentous growth in response to stress. Activates the MAP kinase kinase skh1/pek1 by phosphorylation.</text>
</comment>
<comment type="catalytic activity">
    <reaction>
        <text>L-seryl-[protein] + ATP = O-phospho-L-seryl-[protein] + ADP + H(+)</text>
        <dbReference type="Rhea" id="RHEA:17989"/>
        <dbReference type="Rhea" id="RHEA-COMP:9863"/>
        <dbReference type="Rhea" id="RHEA-COMP:11604"/>
        <dbReference type="ChEBI" id="CHEBI:15378"/>
        <dbReference type="ChEBI" id="CHEBI:29999"/>
        <dbReference type="ChEBI" id="CHEBI:30616"/>
        <dbReference type="ChEBI" id="CHEBI:83421"/>
        <dbReference type="ChEBI" id="CHEBI:456216"/>
        <dbReference type="EC" id="2.7.11.25"/>
    </reaction>
</comment>
<comment type="catalytic activity">
    <reaction>
        <text>L-threonyl-[protein] + ATP = O-phospho-L-threonyl-[protein] + ADP + H(+)</text>
        <dbReference type="Rhea" id="RHEA:46608"/>
        <dbReference type="Rhea" id="RHEA-COMP:11060"/>
        <dbReference type="Rhea" id="RHEA-COMP:11605"/>
        <dbReference type="ChEBI" id="CHEBI:15378"/>
        <dbReference type="ChEBI" id="CHEBI:30013"/>
        <dbReference type="ChEBI" id="CHEBI:30616"/>
        <dbReference type="ChEBI" id="CHEBI:61977"/>
        <dbReference type="ChEBI" id="CHEBI:456216"/>
        <dbReference type="EC" id="2.7.11.25"/>
    </reaction>
</comment>
<comment type="similarity">
    <text evidence="4">Belongs to the protein kinase superfamily. STE Ser/Thr protein kinase family. MAP kinase kinase kinase subfamily.</text>
</comment>
<dbReference type="EC" id="2.7.11.25"/>
<dbReference type="EMBL" id="U53872">
    <property type="protein sequence ID" value="AAB62319.1"/>
    <property type="molecule type" value="Genomic_DNA"/>
</dbReference>
<dbReference type="EMBL" id="CU329670">
    <property type="protein sequence ID" value="CAA94620.1"/>
    <property type="molecule type" value="Genomic_DNA"/>
</dbReference>
<dbReference type="PIR" id="T38073">
    <property type="entry name" value="T38073"/>
</dbReference>
<dbReference type="RefSeq" id="NP_593005.1">
    <property type="nucleotide sequence ID" value="NM_001018404.2"/>
</dbReference>
<dbReference type="SMR" id="Q10407"/>
<dbReference type="BioGRID" id="278650">
    <property type="interactions" value="194"/>
</dbReference>
<dbReference type="FunCoup" id="Q10407">
    <property type="interactions" value="559"/>
</dbReference>
<dbReference type="IntAct" id="Q10407">
    <property type="interactions" value="1"/>
</dbReference>
<dbReference type="STRING" id="284812.Q10407"/>
<dbReference type="iPTMnet" id="Q10407"/>
<dbReference type="PaxDb" id="4896-SPAC1F3.02c.1"/>
<dbReference type="EnsemblFungi" id="SPAC1F3.02c.1">
    <property type="protein sequence ID" value="SPAC1F3.02c.1:pep"/>
    <property type="gene ID" value="SPAC1F3.02c"/>
</dbReference>
<dbReference type="GeneID" id="2542175"/>
<dbReference type="KEGG" id="spo:2542175"/>
<dbReference type="PomBase" id="SPAC1F3.02c">
    <property type="gene designation" value="mkh1"/>
</dbReference>
<dbReference type="VEuPathDB" id="FungiDB:SPAC1F3.02c"/>
<dbReference type="eggNOG" id="KOG0198">
    <property type="taxonomic scope" value="Eukaryota"/>
</dbReference>
<dbReference type="HOGENOM" id="CLU_281062_0_0_1"/>
<dbReference type="InParanoid" id="Q10407"/>
<dbReference type="OMA" id="GGAQYIE"/>
<dbReference type="PhylomeDB" id="Q10407"/>
<dbReference type="BRENDA" id="2.7.11.25">
    <property type="organism ID" value="5613"/>
</dbReference>
<dbReference type="PRO" id="PR:Q10407"/>
<dbReference type="Proteomes" id="UP000002485">
    <property type="component" value="Chromosome I"/>
</dbReference>
<dbReference type="GO" id="GO:0032153">
    <property type="term" value="C:cell division site"/>
    <property type="evidence" value="ECO:0007005"/>
    <property type="project" value="PomBase"/>
</dbReference>
<dbReference type="GO" id="GO:0051286">
    <property type="term" value="C:cell tip"/>
    <property type="evidence" value="ECO:0007005"/>
    <property type="project" value="PomBase"/>
</dbReference>
<dbReference type="GO" id="GO:0005737">
    <property type="term" value="C:cytoplasm"/>
    <property type="evidence" value="ECO:0000314"/>
    <property type="project" value="PomBase"/>
</dbReference>
<dbReference type="GO" id="GO:0005829">
    <property type="term" value="C:cytosol"/>
    <property type="evidence" value="ECO:0007005"/>
    <property type="project" value="PomBase"/>
</dbReference>
<dbReference type="GO" id="GO:0000935">
    <property type="term" value="C:division septum"/>
    <property type="evidence" value="ECO:0000314"/>
    <property type="project" value="PomBase"/>
</dbReference>
<dbReference type="GO" id="GO:0005524">
    <property type="term" value="F:ATP binding"/>
    <property type="evidence" value="ECO:0000255"/>
    <property type="project" value="PomBase"/>
</dbReference>
<dbReference type="GO" id="GO:0004709">
    <property type="term" value="F:MAP kinase kinase kinase activity"/>
    <property type="evidence" value="ECO:0000315"/>
    <property type="project" value="PomBase"/>
</dbReference>
<dbReference type="GO" id="GO:0106310">
    <property type="term" value="F:protein serine kinase activity"/>
    <property type="evidence" value="ECO:0007669"/>
    <property type="project" value="RHEA"/>
</dbReference>
<dbReference type="GO" id="GO:0004674">
    <property type="term" value="F:protein serine/threonine kinase activity"/>
    <property type="evidence" value="ECO:0000318"/>
    <property type="project" value="GO_Central"/>
</dbReference>
<dbReference type="GO" id="GO:0000196">
    <property type="term" value="P:cell integrity MAPK cascade"/>
    <property type="evidence" value="ECO:0000315"/>
    <property type="project" value="PomBase"/>
</dbReference>
<dbReference type="GO" id="GO:0071852">
    <property type="term" value="P:fungal-type cell wall organization or biogenesis"/>
    <property type="evidence" value="ECO:0000315"/>
    <property type="project" value="PomBase"/>
</dbReference>
<dbReference type="CDD" id="cd06629">
    <property type="entry name" value="STKc_Bck1_like"/>
    <property type="match status" value="1"/>
</dbReference>
<dbReference type="FunFam" id="1.10.510.10:FF:000182">
    <property type="entry name" value="MAP kinase kinase kinase mkh1"/>
    <property type="match status" value="1"/>
</dbReference>
<dbReference type="FunFam" id="3.30.200.20:FF:000387">
    <property type="entry name" value="Serine/threonine-protein kinase STE11"/>
    <property type="match status" value="1"/>
</dbReference>
<dbReference type="Gene3D" id="1.10.510.10">
    <property type="entry name" value="Transferase(Phosphotransferase) domain 1"/>
    <property type="match status" value="1"/>
</dbReference>
<dbReference type="InterPro" id="IPR011009">
    <property type="entry name" value="Kinase-like_dom_sf"/>
</dbReference>
<dbReference type="InterPro" id="IPR050538">
    <property type="entry name" value="MAP_kinase_kinase_kinase"/>
</dbReference>
<dbReference type="InterPro" id="IPR000719">
    <property type="entry name" value="Prot_kinase_dom"/>
</dbReference>
<dbReference type="InterPro" id="IPR017441">
    <property type="entry name" value="Protein_kinase_ATP_BS"/>
</dbReference>
<dbReference type="InterPro" id="IPR008271">
    <property type="entry name" value="Ser/Thr_kinase_AS"/>
</dbReference>
<dbReference type="PANTHER" id="PTHR48016">
    <property type="entry name" value="MAP KINASE KINASE KINASE SSK2-RELATED-RELATED"/>
    <property type="match status" value="1"/>
</dbReference>
<dbReference type="PANTHER" id="PTHR48016:SF48">
    <property type="entry name" value="SERINE_THREONINE-PROTEIN KINASE BCK1_SLK1_SSP31"/>
    <property type="match status" value="1"/>
</dbReference>
<dbReference type="Pfam" id="PF00069">
    <property type="entry name" value="Pkinase"/>
    <property type="match status" value="1"/>
</dbReference>
<dbReference type="SMART" id="SM00220">
    <property type="entry name" value="S_TKc"/>
    <property type="match status" value="1"/>
</dbReference>
<dbReference type="SUPFAM" id="SSF56112">
    <property type="entry name" value="Protein kinase-like (PK-like)"/>
    <property type="match status" value="1"/>
</dbReference>
<dbReference type="PROSITE" id="PS00107">
    <property type="entry name" value="PROTEIN_KINASE_ATP"/>
    <property type="match status" value="1"/>
</dbReference>
<dbReference type="PROSITE" id="PS50011">
    <property type="entry name" value="PROTEIN_KINASE_DOM"/>
    <property type="match status" value="1"/>
</dbReference>
<dbReference type="PROSITE" id="PS00108">
    <property type="entry name" value="PROTEIN_KINASE_ST"/>
    <property type="match status" value="1"/>
</dbReference>
<protein>
    <recommendedName>
        <fullName>MAP kinase kinase kinase mkh1</fullName>
        <ecNumber>2.7.11.25</ecNumber>
    </recommendedName>
</protein>
<proteinExistence type="inferred from homology"/>
<gene>
    <name type="primary">mkh1</name>
    <name type="ORF">SPAC1F3.02c</name>
</gene>
<organism>
    <name type="scientific">Schizosaccharomyces pombe (strain 972 / ATCC 24843)</name>
    <name type="common">Fission yeast</name>
    <dbReference type="NCBI Taxonomy" id="284812"/>
    <lineage>
        <taxon>Eukaryota</taxon>
        <taxon>Fungi</taxon>
        <taxon>Dikarya</taxon>
        <taxon>Ascomycota</taxon>
        <taxon>Taphrinomycotina</taxon>
        <taxon>Schizosaccharomycetes</taxon>
        <taxon>Schizosaccharomycetales</taxon>
        <taxon>Schizosaccharomycetaceae</taxon>
        <taxon>Schizosaccharomyces</taxon>
    </lineage>
</organism>